<name>MICA3_BOVIN</name>
<protein>
    <recommendedName>
        <fullName>[F-actin]-monooxygenase MICAL3</fullName>
        <ecNumber evidence="2">1.14.13.225</ecNumber>
    </recommendedName>
    <alternativeName>
        <fullName>Molecule interacting with CasL protein 3</fullName>
        <shortName>MICAL-3</shortName>
    </alternativeName>
</protein>
<gene>
    <name type="primary">MICAL3</name>
</gene>
<feature type="chain" id="PRO_0000416304" description="[F-actin]-monooxygenase MICAL3">
    <location>
        <begin position="1"/>
        <end position="1960"/>
    </location>
</feature>
<feature type="domain" description="Calponin-homology (CH)" evidence="7">
    <location>
        <begin position="518"/>
        <end position="624"/>
    </location>
</feature>
<feature type="domain" description="LIM zinc-binding" evidence="8">
    <location>
        <begin position="762"/>
        <end position="824"/>
    </location>
</feature>
<feature type="domain" description="bMERB" evidence="9">
    <location>
        <begin position="1799"/>
        <end position="1948"/>
    </location>
</feature>
<feature type="region of interest" description="Monooxygenase domain" evidence="5">
    <location>
        <begin position="2"/>
        <end position="494"/>
    </location>
</feature>
<feature type="region of interest" description="Disordered" evidence="10">
    <location>
        <begin position="658"/>
        <end position="704"/>
    </location>
</feature>
<feature type="region of interest" description="Disordered" evidence="10">
    <location>
        <begin position="826"/>
        <end position="887"/>
    </location>
</feature>
<feature type="region of interest" description="Disordered" evidence="10">
    <location>
        <begin position="906"/>
        <end position="1295"/>
    </location>
</feature>
<feature type="region of interest" description="Disordered" evidence="10">
    <location>
        <begin position="1316"/>
        <end position="1550"/>
    </location>
</feature>
<feature type="region of interest" description="Disordered" evidence="10">
    <location>
        <begin position="1564"/>
        <end position="1782"/>
    </location>
</feature>
<feature type="coiled-coil region" evidence="6">
    <location>
        <begin position="1779"/>
        <end position="1952"/>
    </location>
</feature>
<feature type="compositionally biased region" description="Basic and acidic residues" evidence="10">
    <location>
        <begin position="669"/>
        <end position="679"/>
    </location>
</feature>
<feature type="compositionally biased region" description="Acidic residues" evidence="10">
    <location>
        <begin position="984"/>
        <end position="1014"/>
    </location>
</feature>
<feature type="compositionally biased region" description="Basic and acidic residues" evidence="10">
    <location>
        <begin position="1039"/>
        <end position="1051"/>
    </location>
</feature>
<feature type="compositionally biased region" description="Basic and acidic residues" evidence="10">
    <location>
        <begin position="1072"/>
        <end position="1084"/>
    </location>
</feature>
<feature type="compositionally biased region" description="Pro residues" evidence="10">
    <location>
        <begin position="1192"/>
        <end position="1203"/>
    </location>
</feature>
<feature type="compositionally biased region" description="Pro residues" evidence="10">
    <location>
        <begin position="1217"/>
        <end position="1233"/>
    </location>
</feature>
<feature type="compositionally biased region" description="Polar residues" evidence="10">
    <location>
        <begin position="1277"/>
        <end position="1286"/>
    </location>
</feature>
<feature type="compositionally biased region" description="Basic and acidic residues" evidence="10">
    <location>
        <begin position="1379"/>
        <end position="1393"/>
    </location>
</feature>
<feature type="compositionally biased region" description="Low complexity" evidence="10">
    <location>
        <begin position="1394"/>
        <end position="1406"/>
    </location>
</feature>
<feature type="compositionally biased region" description="Polar residues" evidence="10">
    <location>
        <begin position="1407"/>
        <end position="1425"/>
    </location>
</feature>
<feature type="compositionally biased region" description="Acidic residues" evidence="10">
    <location>
        <begin position="1485"/>
        <end position="1503"/>
    </location>
</feature>
<feature type="compositionally biased region" description="Low complexity" evidence="10">
    <location>
        <begin position="1594"/>
        <end position="1611"/>
    </location>
</feature>
<feature type="compositionally biased region" description="Basic and acidic residues" evidence="10">
    <location>
        <begin position="1616"/>
        <end position="1627"/>
    </location>
</feature>
<feature type="compositionally biased region" description="Low complexity" evidence="10">
    <location>
        <begin position="1633"/>
        <end position="1653"/>
    </location>
</feature>
<feature type="compositionally biased region" description="Basic residues" evidence="10">
    <location>
        <begin position="1654"/>
        <end position="1672"/>
    </location>
</feature>
<feature type="compositionally biased region" description="Polar residues" evidence="10">
    <location>
        <begin position="1718"/>
        <end position="1727"/>
    </location>
</feature>
<feature type="compositionally biased region" description="Basic and acidic residues" evidence="10">
    <location>
        <begin position="1762"/>
        <end position="1778"/>
    </location>
</feature>
<feature type="binding site" evidence="5">
    <location>
        <position position="97"/>
    </location>
    <ligand>
        <name>FAD</name>
        <dbReference type="ChEBI" id="CHEBI:57692"/>
    </ligand>
</feature>
<feature type="binding site" evidence="5">
    <location>
        <begin position="116"/>
        <end position="118"/>
    </location>
    <ligand>
        <name>FAD</name>
        <dbReference type="ChEBI" id="CHEBI:57692"/>
    </ligand>
</feature>
<feature type="binding site" evidence="5">
    <location>
        <begin position="123"/>
        <end position="125"/>
    </location>
    <ligand>
        <name>FAD</name>
        <dbReference type="ChEBI" id="CHEBI:57692"/>
    </ligand>
</feature>
<feature type="binding site" evidence="5">
    <location>
        <position position="183"/>
    </location>
    <ligand>
        <name>FAD</name>
        <dbReference type="ChEBI" id="CHEBI:57692"/>
    </ligand>
</feature>
<feature type="binding site" evidence="5">
    <location>
        <position position="298"/>
    </location>
    <ligand>
        <name>FAD</name>
        <dbReference type="ChEBI" id="CHEBI:57692"/>
    </ligand>
</feature>
<feature type="binding site" evidence="5">
    <location>
        <position position="398"/>
    </location>
    <ligand>
        <name>FAD</name>
        <dbReference type="ChEBI" id="CHEBI:57692"/>
    </ligand>
</feature>
<feature type="binding site" evidence="4">
    <location>
        <position position="764"/>
    </location>
    <ligand>
        <name>Zn(2+)</name>
        <dbReference type="ChEBI" id="CHEBI:29105"/>
        <label>1</label>
    </ligand>
</feature>
<feature type="binding site" evidence="4">
    <location>
        <position position="767"/>
    </location>
    <ligand>
        <name>Zn(2+)</name>
        <dbReference type="ChEBI" id="CHEBI:29105"/>
        <label>1</label>
    </ligand>
</feature>
<feature type="binding site" evidence="4">
    <location>
        <position position="785"/>
    </location>
    <ligand>
        <name>Zn(2+)</name>
        <dbReference type="ChEBI" id="CHEBI:29105"/>
        <label>1</label>
    </ligand>
</feature>
<feature type="binding site" evidence="4">
    <location>
        <position position="788"/>
    </location>
    <ligand>
        <name>Zn(2+)</name>
        <dbReference type="ChEBI" id="CHEBI:29105"/>
        <label>1</label>
    </ligand>
</feature>
<feature type="binding site" evidence="4">
    <location>
        <position position="791"/>
    </location>
    <ligand>
        <name>Zn(2+)</name>
        <dbReference type="ChEBI" id="CHEBI:29105"/>
        <label>2</label>
    </ligand>
</feature>
<feature type="binding site" evidence="4">
    <location>
        <position position="794"/>
    </location>
    <ligand>
        <name>Zn(2+)</name>
        <dbReference type="ChEBI" id="CHEBI:29105"/>
        <label>2</label>
    </ligand>
</feature>
<feature type="binding site" evidence="4">
    <location>
        <position position="814"/>
    </location>
    <ligand>
        <name>Zn(2+)</name>
        <dbReference type="ChEBI" id="CHEBI:29105"/>
        <label>2</label>
    </ligand>
</feature>
<feature type="binding site" evidence="4">
    <location>
        <position position="817"/>
    </location>
    <ligand>
        <name>Zn(2+)</name>
        <dbReference type="ChEBI" id="CHEBI:29105"/>
        <label>2</label>
    </ligand>
</feature>
<feature type="modified residue" description="Phosphoserine" evidence="2">
    <location>
        <position position="649"/>
    </location>
</feature>
<feature type="modified residue" description="Phosphoserine" evidence="3">
    <location>
        <position position="685"/>
    </location>
</feature>
<feature type="modified residue" description="Phosphoserine" evidence="3">
    <location>
        <position position="687"/>
    </location>
</feature>
<feature type="modified residue" description="Phosphothreonine" evidence="2">
    <location>
        <position position="887"/>
    </location>
</feature>
<feature type="modified residue" description="Phosphoserine" evidence="3">
    <location>
        <position position="971"/>
    </location>
</feature>
<feature type="modified residue" description="Phosphoserine" evidence="2">
    <location>
        <position position="1129"/>
    </location>
</feature>
<feature type="modified residue" description="Phosphoserine" evidence="2">
    <location>
        <position position="1139"/>
    </location>
</feature>
<feature type="modified residue" description="Phosphoserine" evidence="2">
    <location>
        <position position="1156"/>
    </location>
</feature>
<feature type="modified residue" description="Phosphoserine" evidence="3">
    <location>
        <position position="1188"/>
    </location>
</feature>
<feature type="modified residue" description="Phosphoserine" evidence="2">
    <location>
        <position position="1250"/>
    </location>
</feature>
<feature type="modified residue" description="Phosphothreonine" evidence="2">
    <location>
        <position position="1252"/>
    </location>
</feature>
<feature type="modified residue" description="Phosphoserine" evidence="2">
    <location>
        <position position="1254"/>
    </location>
</feature>
<feature type="modified residue" description="Phosphoserine" evidence="2">
    <location>
        <position position="1286"/>
    </location>
</feature>
<feature type="modified residue" description="Phosphoserine" evidence="2">
    <location>
        <position position="1313"/>
    </location>
</feature>
<feature type="modified residue" description="Phosphothreonine" evidence="2">
    <location>
        <position position="1317"/>
    </location>
</feature>
<feature type="modified residue" description="Phosphoserine" evidence="2">
    <location>
        <position position="1404"/>
    </location>
</feature>
<feature type="modified residue" description="Phosphothreonine" evidence="2">
    <location>
        <position position="1425"/>
    </location>
</feature>
<feature type="modified residue" description="Phosphoserine" evidence="2">
    <location>
        <position position="1660"/>
    </location>
</feature>
<feature type="modified residue" description="Phosphoserine" evidence="2">
    <location>
        <position position="1663"/>
    </location>
</feature>
<feature type="modified residue" description="Phosphoserine" evidence="3">
    <location>
        <position position="1870"/>
    </location>
</feature>
<proteinExistence type="inferred from homology"/>
<reference key="1">
    <citation type="journal article" date="2009" name="Genome Biol.">
        <title>A whole-genome assembly of the domestic cow, Bos taurus.</title>
        <authorList>
            <person name="Zimin A.V."/>
            <person name="Delcher A.L."/>
            <person name="Florea L."/>
            <person name="Kelley D.R."/>
            <person name="Schatz M.C."/>
            <person name="Puiu D."/>
            <person name="Hanrahan F."/>
            <person name="Pertea G."/>
            <person name="Van Tassell C.P."/>
            <person name="Sonstegard T.S."/>
            <person name="Marcais G."/>
            <person name="Roberts M."/>
            <person name="Subramanian P."/>
            <person name="Yorke J.A."/>
            <person name="Salzberg S.L."/>
        </authorList>
    </citation>
    <scope>NUCLEOTIDE SEQUENCE [LARGE SCALE GENOMIC DNA]</scope>
    <source>
        <strain>Hereford</strain>
    </source>
</reference>
<accession>G3MWR8</accession>
<evidence type="ECO:0000250" key="1"/>
<evidence type="ECO:0000250" key="2">
    <source>
        <dbReference type="UniProtKB" id="Q7RTP6"/>
    </source>
</evidence>
<evidence type="ECO:0000250" key="3">
    <source>
        <dbReference type="UniProtKB" id="Q8CJ19"/>
    </source>
</evidence>
<evidence type="ECO:0000250" key="4">
    <source>
        <dbReference type="UniProtKB" id="Q8TDZ2"/>
    </source>
</evidence>
<evidence type="ECO:0000250" key="5">
    <source>
        <dbReference type="UniProtKB" id="Q8VDP3"/>
    </source>
</evidence>
<evidence type="ECO:0000255" key="6"/>
<evidence type="ECO:0000255" key="7">
    <source>
        <dbReference type="PROSITE-ProRule" id="PRU00044"/>
    </source>
</evidence>
<evidence type="ECO:0000255" key="8">
    <source>
        <dbReference type="PROSITE-ProRule" id="PRU00125"/>
    </source>
</evidence>
<evidence type="ECO:0000255" key="9">
    <source>
        <dbReference type="PROSITE-ProRule" id="PRU01195"/>
    </source>
</evidence>
<evidence type="ECO:0000256" key="10">
    <source>
        <dbReference type="SAM" id="MobiDB-lite"/>
    </source>
</evidence>
<evidence type="ECO:0000305" key="11"/>
<sequence>MEESKNEATNRAHVLFDRFVQATTCKGTLKAFQELCDHLELKPKDHRSFYHKLKSKLNYWKAKALWAKLDKRGSHKDYKKGKVCTNTKCLIIGAGPCGLRTAIDLSLLGAKVVVIEKRDAFSRNNVLHLWPFTIHDLRGLGAKKFYGKFCAGAIDHISIRQLQLILLKVALILGIEIHVNVEFRGLVEPPEDQENERIGWRALVHPKTHPVSEYEFEVIIGGDGRRNTLEGFRRKEFRGKLAIAITANFINRNTTAEAKVEEISGVAFIFNQKFFQELREATGIDLENIVYYKDDTHYFVMTAKKQSLLDKGVILHDYADTELLLSRENVDQEALLSYAREAADFSTQQQLPSLDFAINHYGQPDVAMFDFTCMYASENAALVREHNGHQLLVALVGDSLLEPFWPMGTGIARGFLAAMDSAWMVRSWSLGTSPLEVLAERESIYRLLPQTTPENVSKNFSQYSIDPVTRYPNVNVNFLRPSQVRHLYDTGDTKDVHLEMENLVNSRTTPKLARNESVARSSKLLGWCQRQTDGYAGVNVTDLTMSWKSGLALCAIIHRYRPDLIDFDSLDEQNVEKNNQLAFDIAEKELGISPIMTGREMASVGEPDKLSMVMYLTQFYEMFKDSLPSRDASDLNAEERAVLIASTKSPISFLSKLGQTISRKRSPKDKKEKDLDGAGKRRKTSQSEEEDTPRGHRGARPTLVSTLTDRRMDVALGNQNKVKYMATQLLAKFEENAPPQSVGVRRQGSIKKEFPQNLGGSDTCYFCQKRVYVMERLSAEGKFFHRSCFKCEHCATTLRLSAYAYALEDGKFYCKPHYCYRLSGPAQRKRPAGVPLSGKEARGPLQDSPAADASGRPSTSASPAERSPGPSVNGLEEPSVAKRLRGTPERIELENYRLSVRQAEGLEEVPEETQAEHNLSSVLDTGTEEDAASSSSESEMEEEEPPLPTSDLGGVPWKEAVRIHALLRGKSEEELEASRSFGAGEEEEEDEEDEEEEEEEEDEEDEEEDEDESSEVGSPRRLQQLLNPADPLEIQADVHWTHIRESQEERAALAPKSPLPGVPFDEDDLERDVDSEPAEIKGEAAENGDAGDTGAELDDDQHWSDDVPSEANTELHLPAVGAELELRVSDGEEEPPPASVGHPERGPSRVSSPTRSPEEPTGLSSPARSPGAQSAHPPLAAVATGVRSPAESPLPEPSTPPAEPEAHPPIRSQPEARTPPSPASPQRPSPPTQLPICSQPQPSPEATVPSPTLSPIRSQPVPARTSTPLAPLPVKNQGVTKDTLGSSLPGDEALKRSDLVAEFWMKSAEIRRSLGLTPVHRSPGSELAFQSPPLKACPAEKAPQSEGLRLLKPPPVPRKLGLPAAEGAQPCPPTPVSPPDREPKGPREEHRDLSSSSGLGLQGSSSRTRTPGSQSFNTSDSTMLTPPSSPPPPPPDEEPATLHRKPALAGQLVASAPPPPAVCVRPPREPTQPPQEEARKSFVESVDEIPFADDVEDTYDDNTCDDRTEDSSLQETFFTPPSHWPHPKQPLAPENGRGPESAVPLQKRGLPLVSAEAKELAAERMRAREKSVRSQALRDAMARQLSRMKEMDIAAAAPRTPRTPAPRRATAVPPKGPEEPAPRHEATSEELLSPPSDSGGPDGSVTSSEGSSGKSKKRSSLFSPRRSKKEKKPKGEGRPLERPSPGTLEEAAAKPRSLWKSVFSGYRKDKKKSDGRSCPSTPSSGTTVDAGKPRASPVSRAELRTRRQLSCSEDSDLSSDDVLERTSQKSRKEPRTYTEEELNAKLTRRVQKAARRQAKQEELKRLHRAQIIQRQLEQVEEKQRQLEERGVAVEKALRGEAGMGKKDDPKLMQEWFKLVQEKNAMVRYESELMIFARELELEDRQSRLQQELRERMAVEDHLKTEEELAEEKRILNEMLEVVEQRDALVALLEEQRLREKEEDKDLEAAMLSKGFSLHWS</sequence>
<organism>
    <name type="scientific">Bos taurus</name>
    <name type="common">Bovine</name>
    <dbReference type="NCBI Taxonomy" id="9913"/>
    <lineage>
        <taxon>Eukaryota</taxon>
        <taxon>Metazoa</taxon>
        <taxon>Chordata</taxon>
        <taxon>Craniata</taxon>
        <taxon>Vertebrata</taxon>
        <taxon>Euteleostomi</taxon>
        <taxon>Mammalia</taxon>
        <taxon>Eutheria</taxon>
        <taxon>Laurasiatheria</taxon>
        <taxon>Artiodactyla</taxon>
        <taxon>Ruminantia</taxon>
        <taxon>Pecora</taxon>
        <taxon>Bovidae</taxon>
        <taxon>Bovinae</taxon>
        <taxon>Bos</taxon>
    </lineage>
</organism>
<dbReference type="EC" id="1.14.13.225" evidence="2"/>
<dbReference type="EMBL" id="DAAA02014628">
    <property type="status" value="NOT_ANNOTATED_CDS"/>
    <property type="molecule type" value="Genomic_DNA"/>
</dbReference>
<dbReference type="EMBL" id="DAAA02014629">
    <property type="status" value="NOT_ANNOTATED_CDS"/>
    <property type="molecule type" value="Genomic_DNA"/>
</dbReference>
<dbReference type="RefSeq" id="XP_002687965.2">
    <property type="nucleotide sequence ID" value="XM_002687919.5"/>
</dbReference>
<dbReference type="RefSeq" id="XP_015319081.1">
    <property type="nucleotide sequence ID" value="XM_015463595.1"/>
</dbReference>
<dbReference type="SMR" id="G3MWR8"/>
<dbReference type="FunCoup" id="G3MWR8">
    <property type="interactions" value="825"/>
</dbReference>
<dbReference type="STRING" id="9913.ENSBTAP00000053971"/>
<dbReference type="SwissPalm" id="G3MWR8"/>
<dbReference type="PaxDb" id="9913-ENSBTAP00000053971"/>
<dbReference type="eggNOG" id="KOG1700">
    <property type="taxonomic scope" value="Eukaryota"/>
</dbReference>
<dbReference type="HOGENOM" id="CLU_000329_1_1_1"/>
<dbReference type="InParanoid" id="G3MWR8"/>
<dbReference type="TreeFam" id="TF333408"/>
<dbReference type="Proteomes" id="UP000009136">
    <property type="component" value="Unplaced"/>
</dbReference>
<dbReference type="GO" id="GO:0005938">
    <property type="term" value="C:cell cortex"/>
    <property type="evidence" value="ECO:0007669"/>
    <property type="project" value="UniProtKB-SubCell"/>
</dbReference>
<dbReference type="GO" id="GO:0042995">
    <property type="term" value="C:cell projection"/>
    <property type="evidence" value="ECO:0007669"/>
    <property type="project" value="UniProtKB-KW"/>
</dbReference>
<dbReference type="GO" id="GO:0030496">
    <property type="term" value="C:midbody"/>
    <property type="evidence" value="ECO:0007669"/>
    <property type="project" value="UniProtKB-SubCell"/>
</dbReference>
<dbReference type="GO" id="GO:0005634">
    <property type="term" value="C:nucleus"/>
    <property type="evidence" value="ECO:0000250"/>
    <property type="project" value="UniProtKB"/>
</dbReference>
<dbReference type="GO" id="GO:0005819">
    <property type="term" value="C:spindle"/>
    <property type="evidence" value="ECO:0007669"/>
    <property type="project" value="UniProtKB-SubCell"/>
</dbReference>
<dbReference type="GO" id="GO:0003779">
    <property type="term" value="F:actin binding"/>
    <property type="evidence" value="ECO:0000250"/>
    <property type="project" value="UniProtKB"/>
</dbReference>
<dbReference type="GO" id="GO:0120501">
    <property type="term" value="F:F-actin monooxygenase activity"/>
    <property type="evidence" value="ECO:0007669"/>
    <property type="project" value="UniProtKB-EC"/>
</dbReference>
<dbReference type="GO" id="GO:0071949">
    <property type="term" value="F:FAD binding"/>
    <property type="evidence" value="ECO:0000250"/>
    <property type="project" value="UniProtKB"/>
</dbReference>
<dbReference type="GO" id="GO:0046872">
    <property type="term" value="F:metal ion binding"/>
    <property type="evidence" value="ECO:0007669"/>
    <property type="project" value="UniProtKB-KW"/>
</dbReference>
<dbReference type="GO" id="GO:0016709">
    <property type="term" value="F:oxidoreductase activity, acting on paired donors, with incorporation or reduction of molecular oxygen, NAD(P)H as one donor, and incorporation of one atom of oxygen"/>
    <property type="evidence" value="ECO:0000250"/>
    <property type="project" value="UniProtKB"/>
</dbReference>
<dbReference type="GO" id="GO:0030042">
    <property type="term" value="P:actin filament depolymerization"/>
    <property type="evidence" value="ECO:0000250"/>
    <property type="project" value="UniProtKB"/>
</dbReference>
<dbReference type="GO" id="GO:0007010">
    <property type="term" value="P:cytoskeleton organization"/>
    <property type="evidence" value="ECO:0000250"/>
    <property type="project" value="UniProtKB"/>
</dbReference>
<dbReference type="GO" id="GO:0006887">
    <property type="term" value="P:exocytosis"/>
    <property type="evidence" value="ECO:0007669"/>
    <property type="project" value="UniProtKB-KW"/>
</dbReference>
<dbReference type="CDD" id="cd21251">
    <property type="entry name" value="CH_MICAL3"/>
    <property type="match status" value="1"/>
</dbReference>
<dbReference type="CDD" id="cd09439">
    <property type="entry name" value="LIM_Mical"/>
    <property type="match status" value="1"/>
</dbReference>
<dbReference type="FunFam" id="3.50.50.60:FF:000004">
    <property type="entry name" value="protein-methionine sulfoxide oxidase MICAL2 isoform X1"/>
    <property type="match status" value="1"/>
</dbReference>
<dbReference type="FunFam" id="1.10.418.10:FF:000026">
    <property type="entry name" value="protein-methionine sulfoxide oxidase MICAL3 isoform X1"/>
    <property type="match status" value="1"/>
</dbReference>
<dbReference type="FunFam" id="2.10.110.10:FF:000043">
    <property type="entry name" value="protein-methionine sulfoxide oxidase MICAL3 isoform X2"/>
    <property type="match status" value="1"/>
</dbReference>
<dbReference type="Gene3D" id="1.10.418.10">
    <property type="entry name" value="Calponin-like domain"/>
    <property type="match status" value="1"/>
</dbReference>
<dbReference type="Gene3D" id="2.10.110.10">
    <property type="entry name" value="Cysteine Rich Protein"/>
    <property type="match status" value="1"/>
</dbReference>
<dbReference type="Gene3D" id="3.50.50.60">
    <property type="entry name" value="FAD/NAD(P)-binding domain"/>
    <property type="match status" value="1"/>
</dbReference>
<dbReference type="InterPro" id="IPR022735">
    <property type="entry name" value="bMERB_dom"/>
</dbReference>
<dbReference type="InterPro" id="IPR001715">
    <property type="entry name" value="CH_dom"/>
</dbReference>
<dbReference type="InterPro" id="IPR036872">
    <property type="entry name" value="CH_dom_sf"/>
</dbReference>
<dbReference type="InterPro" id="IPR050540">
    <property type="entry name" value="F-actin_Monoox_Mical"/>
</dbReference>
<dbReference type="InterPro" id="IPR002938">
    <property type="entry name" value="FAD-bd"/>
</dbReference>
<dbReference type="InterPro" id="IPR036188">
    <property type="entry name" value="FAD/NAD-bd_sf"/>
</dbReference>
<dbReference type="InterPro" id="IPR001781">
    <property type="entry name" value="Znf_LIM"/>
</dbReference>
<dbReference type="PANTHER" id="PTHR23167:SF51">
    <property type="entry name" value="[F-ACTIN]-MONOOXYGENASE MICAL3"/>
    <property type="match status" value="1"/>
</dbReference>
<dbReference type="PANTHER" id="PTHR23167">
    <property type="entry name" value="CALPONIN HOMOLOGY DOMAIN-CONTAINING PROTEIN DDB_G0272472-RELATED"/>
    <property type="match status" value="1"/>
</dbReference>
<dbReference type="Pfam" id="PF12130">
    <property type="entry name" value="bMERB_dom"/>
    <property type="match status" value="1"/>
</dbReference>
<dbReference type="Pfam" id="PF00307">
    <property type="entry name" value="CH"/>
    <property type="match status" value="1"/>
</dbReference>
<dbReference type="Pfam" id="PF01494">
    <property type="entry name" value="FAD_binding_3"/>
    <property type="match status" value="1"/>
</dbReference>
<dbReference type="Pfam" id="PF00412">
    <property type="entry name" value="LIM"/>
    <property type="match status" value="1"/>
</dbReference>
<dbReference type="Pfam" id="PF25413">
    <property type="entry name" value="Rossman_Mical"/>
    <property type="match status" value="1"/>
</dbReference>
<dbReference type="PRINTS" id="PR00420">
    <property type="entry name" value="RNGMNOXGNASE"/>
</dbReference>
<dbReference type="SMART" id="SM00033">
    <property type="entry name" value="CH"/>
    <property type="match status" value="1"/>
</dbReference>
<dbReference type="SMART" id="SM01203">
    <property type="entry name" value="DUF3585"/>
    <property type="match status" value="1"/>
</dbReference>
<dbReference type="SMART" id="SM00132">
    <property type="entry name" value="LIM"/>
    <property type="match status" value="1"/>
</dbReference>
<dbReference type="SUPFAM" id="SSF47576">
    <property type="entry name" value="Calponin-homology domain, CH-domain"/>
    <property type="match status" value="1"/>
</dbReference>
<dbReference type="SUPFAM" id="SSF51905">
    <property type="entry name" value="FAD/NAD(P)-binding domain"/>
    <property type="match status" value="1"/>
</dbReference>
<dbReference type="SUPFAM" id="SSF57716">
    <property type="entry name" value="Glucocorticoid receptor-like (DNA-binding domain)"/>
    <property type="match status" value="1"/>
</dbReference>
<dbReference type="PROSITE" id="PS51848">
    <property type="entry name" value="BMERB"/>
    <property type="match status" value="1"/>
</dbReference>
<dbReference type="PROSITE" id="PS50021">
    <property type="entry name" value="CH"/>
    <property type="match status" value="1"/>
</dbReference>
<dbReference type="PROSITE" id="PS00478">
    <property type="entry name" value="LIM_DOMAIN_1"/>
    <property type="match status" value="1"/>
</dbReference>
<dbReference type="PROSITE" id="PS50023">
    <property type="entry name" value="LIM_DOMAIN_2"/>
    <property type="match status" value="1"/>
</dbReference>
<comment type="function">
    <text evidence="2">Monooxygenase that promotes depolymerization of F-actin by mediating oxidation of specific methionine residues on actin to form methionine-sulfoxide, resulting in actin filament disassembly and preventing repolymerization. In the absence of actin, it also functions as a NADPH oxidase producing H(2)O(2). Seems to act as Rab effector protein and play a role in vesicle trafficking. Involved in exocytic vesicles tethering and fusion: the monooxygenase activity is required for this process and implicates RAB8A associated with exocytotic vesicles. Required for cytokinesis. Contributes to stabilization and/or maturation of the intercellular bridge independently of its monooxygenase activity. Promotes recruitment of Rab8 and ERC1 to the intercellular bridge, and together these proteins are proposed to function in timely abscission.</text>
</comment>
<comment type="catalytic activity">
    <reaction evidence="2">
        <text>L-methionyl-[F-actin] + NADPH + O2 + H(+) = L-methionyl-(R)-S-oxide-[F-actin] + NADP(+) + H2O</text>
        <dbReference type="Rhea" id="RHEA:51308"/>
        <dbReference type="Rhea" id="RHEA-COMP:12953"/>
        <dbReference type="Rhea" id="RHEA-COMP:12956"/>
        <dbReference type="ChEBI" id="CHEBI:15377"/>
        <dbReference type="ChEBI" id="CHEBI:15378"/>
        <dbReference type="ChEBI" id="CHEBI:15379"/>
        <dbReference type="ChEBI" id="CHEBI:16044"/>
        <dbReference type="ChEBI" id="CHEBI:45764"/>
        <dbReference type="ChEBI" id="CHEBI:57783"/>
        <dbReference type="ChEBI" id="CHEBI:58349"/>
        <dbReference type="EC" id="1.14.13.225"/>
    </reaction>
</comment>
<comment type="cofactor">
    <cofactor evidence="1">
        <name>FAD</name>
        <dbReference type="ChEBI" id="CHEBI:57692"/>
    </cofactor>
</comment>
<comment type="subunit">
    <text evidence="2">Interacts with RAB1B, RAB8A, RAB10, RAB13 and RAB15 (in their GTP-bound forms); binding to RAB1B is of low affinity compared to other Rab proteins; at least in case of RAB8A can bind 2 molecules of RAB8A simultaneously through a high and a low affinity binding site, respectively. Interacts with ERC1 and RAB8A; may bridge ERC1 with RAB8A. Interacts with KIF23 and ERC1; enhances the interaction between KIF23 and ERC1. Interacts with NINL.</text>
</comment>
<comment type="subcellular location">
    <subcellularLocation>
        <location evidence="2">Cytoplasm</location>
    </subcellularLocation>
    <subcellularLocation>
        <location evidence="2">Cytoplasm</location>
        <location evidence="2">Cell cortex</location>
    </subcellularLocation>
    <subcellularLocation>
        <location evidence="2">Cytoplasm</location>
        <location evidence="2">Cytoskeleton</location>
    </subcellularLocation>
    <subcellularLocation>
        <location evidence="2">Nucleus</location>
    </subcellularLocation>
    <subcellularLocation>
        <location evidence="2">Midbody</location>
    </subcellularLocation>
    <subcellularLocation>
        <location evidence="2">Cytoplasm</location>
        <location evidence="2">Cytoskeleton</location>
        <location evidence="2">Spindle</location>
    </subcellularLocation>
    <subcellularLocation>
        <location evidence="2">Cytoplasm</location>
        <location evidence="2">Cytoskeleton</location>
        <location evidence="2">Cilium basal body</location>
    </subcellularLocation>
    <text evidence="2">Mainly localizes in the nucleus.</text>
</comment>
<comment type="domain">
    <text evidence="2">The bivalent Mical/EHBP Rab binding (bMERB) domain, mediates binding to predominantly Rab8, Rab10, Rab10, Rab13 and Rab15 (in their GTP-bound forms).</text>
</comment>
<comment type="similarity">
    <text evidence="11">Belongs to the Mical family.</text>
</comment>
<keyword id="KW-0009">Actin-binding</keyword>
<keyword id="KW-0966">Cell projection</keyword>
<keyword id="KW-0175">Coiled coil</keyword>
<keyword id="KW-0963">Cytoplasm</keyword>
<keyword id="KW-0206">Cytoskeleton</keyword>
<keyword id="KW-0268">Exocytosis</keyword>
<keyword id="KW-0274">FAD</keyword>
<keyword id="KW-0285">Flavoprotein</keyword>
<keyword id="KW-0440">LIM domain</keyword>
<keyword id="KW-0479">Metal-binding</keyword>
<keyword id="KW-0503">Monooxygenase</keyword>
<keyword id="KW-0521">NADP</keyword>
<keyword id="KW-0539">Nucleus</keyword>
<keyword id="KW-0560">Oxidoreductase</keyword>
<keyword id="KW-0597">Phosphoprotein</keyword>
<keyword id="KW-1185">Reference proteome</keyword>
<keyword id="KW-0862">Zinc</keyword>